<gene>
    <name type="primary">flgJ</name>
    <name type="synonym">fla FX</name>
    <name type="synonym">flaZ</name>
    <name type="ordered locus">Z1719</name>
    <name type="ordered locus">ECs1459</name>
</gene>
<comment type="function">
    <text evidence="1">Flagellum-specific muramidase which hydrolyzes the peptidoglycan layer to assemble the rod structure in the periplasmic space.</text>
</comment>
<comment type="subcellular location">
    <subcellularLocation>
        <location evidence="1">Periplasm</location>
    </subcellularLocation>
</comment>
<comment type="miscellaneous">
    <text>Probably exported via the flagellum-specific export pathway.</text>
</comment>
<comment type="similarity">
    <text evidence="3">In the N-terminal section; belongs to the FlgJ family.</text>
</comment>
<comment type="similarity">
    <text evidence="3">In the C-terminal section; belongs to the glycosyl hydrolase 73 family.</text>
</comment>
<proteinExistence type="inferred from homology"/>
<reference key="1">
    <citation type="journal article" date="2001" name="Nature">
        <title>Genome sequence of enterohaemorrhagic Escherichia coli O157:H7.</title>
        <authorList>
            <person name="Perna N.T."/>
            <person name="Plunkett G. III"/>
            <person name="Burland V."/>
            <person name="Mau B."/>
            <person name="Glasner J.D."/>
            <person name="Rose D.J."/>
            <person name="Mayhew G.F."/>
            <person name="Evans P.S."/>
            <person name="Gregor J."/>
            <person name="Kirkpatrick H.A."/>
            <person name="Posfai G."/>
            <person name="Hackett J."/>
            <person name="Klink S."/>
            <person name="Boutin A."/>
            <person name="Shao Y."/>
            <person name="Miller L."/>
            <person name="Grotbeck E.J."/>
            <person name="Davis N.W."/>
            <person name="Lim A."/>
            <person name="Dimalanta E.T."/>
            <person name="Potamousis K."/>
            <person name="Apodaca J."/>
            <person name="Anantharaman T.S."/>
            <person name="Lin J."/>
            <person name="Yen G."/>
            <person name="Schwartz D.C."/>
            <person name="Welch R.A."/>
            <person name="Blattner F.R."/>
        </authorList>
    </citation>
    <scope>NUCLEOTIDE SEQUENCE [LARGE SCALE GENOMIC DNA]</scope>
    <source>
        <strain>O157:H7 / EDL933 / ATCC 700927 / EHEC</strain>
    </source>
</reference>
<reference key="2">
    <citation type="journal article" date="2001" name="DNA Res.">
        <title>Complete genome sequence of enterohemorrhagic Escherichia coli O157:H7 and genomic comparison with a laboratory strain K-12.</title>
        <authorList>
            <person name="Hayashi T."/>
            <person name="Makino K."/>
            <person name="Ohnishi M."/>
            <person name="Kurokawa K."/>
            <person name="Ishii K."/>
            <person name="Yokoyama K."/>
            <person name="Han C.-G."/>
            <person name="Ohtsubo E."/>
            <person name="Nakayama K."/>
            <person name="Murata T."/>
            <person name="Tanaka M."/>
            <person name="Tobe T."/>
            <person name="Iida T."/>
            <person name="Takami H."/>
            <person name="Honda T."/>
            <person name="Sasakawa C."/>
            <person name="Ogasawara N."/>
            <person name="Yasunaga T."/>
            <person name="Kuhara S."/>
            <person name="Shiba T."/>
            <person name="Hattori M."/>
            <person name="Shinagawa H."/>
        </authorList>
    </citation>
    <scope>NUCLEOTIDE SEQUENCE [LARGE SCALE GENOMIC DNA]</scope>
    <source>
        <strain>O157:H7 / Sakai / RIMD 0509952 / EHEC</strain>
    </source>
</reference>
<sequence>MISDSKLLASAAWDAQSLNELKAKASEDPAANIRPVARQVEGMFVQMMLKSMRDALPKDGLFSSEHTRLYTSMYDQQIAQQMTTGKGLGLAEMMVKQMTPEQPLPEESTPAAPMKFPLETVVRYQNQALSQLVQKAVPRNYDDSLPGDSKAFLAQLSLPAQLASQQSGVPHHLILAQAALESGWGQRQIRRENGEPSYNLFGVKASGNWKGPVTEITTTEYENGEAKKVKAKFRVYSSYLEALSDYVGLLTRNPRYAAVTTAASAEQGAQALQDAGYATDPHYARKLTNMIQQMKSISDKVSKTYSMNIDNLF</sequence>
<evidence type="ECO:0000250" key="1"/>
<evidence type="ECO:0000255" key="2"/>
<evidence type="ECO:0000305" key="3"/>
<dbReference type="EC" id="3.2.1.-"/>
<dbReference type="EMBL" id="AE005174">
    <property type="protein sequence ID" value="AAG55827.1"/>
    <property type="molecule type" value="Genomic_DNA"/>
</dbReference>
<dbReference type="EMBL" id="BA000007">
    <property type="protein sequence ID" value="BAB34882.1"/>
    <property type="molecule type" value="Genomic_DNA"/>
</dbReference>
<dbReference type="PIR" id="C90811">
    <property type="entry name" value="C90811"/>
</dbReference>
<dbReference type="PIR" id="G85670">
    <property type="entry name" value="G85670"/>
</dbReference>
<dbReference type="RefSeq" id="NP_309486.1">
    <property type="nucleotide sequence ID" value="NC_002695.1"/>
</dbReference>
<dbReference type="RefSeq" id="WP_001301817.1">
    <property type="nucleotide sequence ID" value="NZ_VOAI01000018.1"/>
</dbReference>
<dbReference type="SMR" id="P58231"/>
<dbReference type="STRING" id="155864.Z1719"/>
<dbReference type="CAZy" id="GH73">
    <property type="family name" value="Glycoside Hydrolase Family 73"/>
</dbReference>
<dbReference type="GeneID" id="912388"/>
<dbReference type="KEGG" id="ece:Z1719"/>
<dbReference type="KEGG" id="ecs:ECs_1459"/>
<dbReference type="PATRIC" id="fig|386585.9.peg.1560"/>
<dbReference type="eggNOG" id="COG1705">
    <property type="taxonomic scope" value="Bacteria"/>
</dbReference>
<dbReference type="eggNOG" id="COG3951">
    <property type="taxonomic scope" value="Bacteria"/>
</dbReference>
<dbReference type="HOGENOM" id="CLU_013771_3_0_6"/>
<dbReference type="OMA" id="GHETGWG"/>
<dbReference type="Proteomes" id="UP000000558">
    <property type="component" value="Chromosome"/>
</dbReference>
<dbReference type="Proteomes" id="UP000002519">
    <property type="component" value="Chromosome"/>
</dbReference>
<dbReference type="GO" id="GO:0042597">
    <property type="term" value="C:periplasmic space"/>
    <property type="evidence" value="ECO:0007669"/>
    <property type="project" value="UniProtKB-SubCell"/>
</dbReference>
<dbReference type="GO" id="GO:0004040">
    <property type="term" value="F:amidase activity"/>
    <property type="evidence" value="ECO:0007669"/>
    <property type="project" value="InterPro"/>
</dbReference>
<dbReference type="GO" id="GO:0016798">
    <property type="term" value="F:hydrolase activity, acting on glycosyl bonds"/>
    <property type="evidence" value="ECO:0007669"/>
    <property type="project" value="UniProtKB-KW"/>
</dbReference>
<dbReference type="GO" id="GO:0044780">
    <property type="term" value="P:bacterial-type flagellum assembly"/>
    <property type="evidence" value="ECO:0007669"/>
    <property type="project" value="InterPro"/>
</dbReference>
<dbReference type="GO" id="GO:0071973">
    <property type="term" value="P:bacterial-type flagellum-dependent cell motility"/>
    <property type="evidence" value="ECO:0007669"/>
    <property type="project" value="TreeGrafter"/>
</dbReference>
<dbReference type="GO" id="GO:0071555">
    <property type="term" value="P:cell wall organization"/>
    <property type="evidence" value="ECO:0007669"/>
    <property type="project" value="UniProtKB-KW"/>
</dbReference>
<dbReference type="FunFam" id="2.10.70.40:FF:000001">
    <property type="entry name" value="Flagellar assembly peptidoglycan hydrolase FlgJ"/>
    <property type="match status" value="1"/>
</dbReference>
<dbReference type="Gene3D" id="1.10.530.10">
    <property type="match status" value="1"/>
</dbReference>
<dbReference type="Gene3D" id="2.10.70.40">
    <property type="entry name" value="peptidoglycan hydrolase"/>
    <property type="match status" value="1"/>
</dbReference>
<dbReference type="InterPro" id="IPR019301">
    <property type="entry name" value="Flagellar_prot_FlgJ_N"/>
</dbReference>
<dbReference type="InterPro" id="IPR013377">
    <property type="entry name" value="FlgJ"/>
</dbReference>
<dbReference type="InterPro" id="IPR051056">
    <property type="entry name" value="Glycosyl_Hydrolase_73"/>
</dbReference>
<dbReference type="InterPro" id="IPR002901">
    <property type="entry name" value="MGlyc_endo_b_GlcNAc-like_dom"/>
</dbReference>
<dbReference type="NCBIfam" id="TIGR02541">
    <property type="entry name" value="flagell_FlgJ"/>
    <property type="match status" value="1"/>
</dbReference>
<dbReference type="PANTHER" id="PTHR33308">
    <property type="entry name" value="PEPTIDOGLYCAN HYDROLASE FLGJ"/>
    <property type="match status" value="1"/>
</dbReference>
<dbReference type="PANTHER" id="PTHR33308:SF9">
    <property type="entry name" value="PEPTIDOGLYCAN HYDROLASE FLGJ"/>
    <property type="match status" value="1"/>
</dbReference>
<dbReference type="Pfam" id="PF01832">
    <property type="entry name" value="Glucosaminidase"/>
    <property type="match status" value="1"/>
</dbReference>
<dbReference type="Pfam" id="PF10135">
    <property type="entry name" value="Rod-binding"/>
    <property type="match status" value="1"/>
</dbReference>
<dbReference type="PRINTS" id="PR01002">
    <property type="entry name" value="FLGFLGJ"/>
</dbReference>
<dbReference type="SMART" id="SM00047">
    <property type="entry name" value="LYZ2"/>
    <property type="match status" value="1"/>
</dbReference>
<accession>P58231</accession>
<keyword id="KW-1005">Bacterial flagellum biogenesis</keyword>
<keyword id="KW-0961">Cell wall biogenesis/degradation</keyword>
<keyword id="KW-0326">Glycosidase</keyword>
<keyword id="KW-0378">Hydrolase</keyword>
<keyword id="KW-0574">Periplasm</keyword>
<keyword id="KW-1185">Reference proteome</keyword>
<organism>
    <name type="scientific">Escherichia coli O157:H7</name>
    <dbReference type="NCBI Taxonomy" id="83334"/>
    <lineage>
        <taxon>Bacteria</taxon>
        <taxon>Pseudomonadati</taxon>
        <taxon>Pseudomonadota</taxon>
        <taxon>Gammaproteobacteria</taxon>
        <taxon>Enterobacterales</taxon>
        <taxon>Enterobacteriaceae</taxon>
        <taxon>Escherichia</taxon>
    </lineage>
</organism>
<name>FLGJ_ECO57</name>
<protein>
    <recommendedName>
        <fullName>Peptidoglycan hydrolase FlgJ</fullName>
        <ecNumber>3.2.1.-</ecNumber>
    </recommendedName>
    <alternativeName>
        <fullName>Muramidase FlgJ</fullName>
    </alternativeName>
</protein>
<feature type="chain" id="PRO_0000165706" description="Peptidoglycan hydrolase FlgJ">
    <location>
        <begin position="1"/>
        <end position="313"/>
    </location>
</feature>
<feature type="region of interest" description="Catalytic">
    <location>
        <begin position="148"/>
        <end position="313"/>
    </location>
</feature>
<feature type="active site" evidence="2">
    <location>
        <position position="220"/>
    </location>
</feature>
<feature type="active site" evidence="2">
    <location>
        <position position="245"/>
    </location>
</feature>